<keyword id="KW-0521">NADP</keyword>
<keyword id="KW-0560">Oxidoreductase</keyword>
<keyword id="KW-1185">Reference proteome</keyword>
<comment type="similarity">
    <text evidence="2">Belongs to the aldo/keto reductase family. Aldo/keto reductase 2 subfamily.</text>
</comment>
<gene>
    <name type="primary">tas</name>
    <name type="ordered locus">SF2844</name>
    <name type="ordered locus">S3042</name>
</gene>
<proteinExistence type="inferred from homology"/>
<name>TAS_SHIFL</name>
<evidence type="ECO:0000250" key="1"/>
<evidence type="ECO:0000305" key="2"/>
<accession>P0A9T5</accession>
<accession>Q46933</accession>
<feature type="chain" id="PRO_0000070387" description="Protein tas">
    <location>
        <begin position="1"/>
        <end position="346"/>
    </location>
</feature>
<feature type="active site" description="Proton donor" evidence="1">
    <location>
        <position position="53"/>
    </location>
</feature>
<feature type="binding site" evidence="1">
    <location>
        <begin position="234"/>
        <end position="244"/>
    </location>
    <ligand>
        <name>NADP(+)</name>
        <dbReference type="ChEBI" id="CHEBI:58349"/>
    </ligand>
</feature>
<dbReference type="EMBL" id="AE005674">
    <property type="protein sequence ID" value="AAN44330.1"/>
    <property type="molecule type" value="Genomic_DNA"/>
</dbReference>
<dbReference type="EMBL" id="AE014073">
    <property type="protein sequence ID" value="AAP18156.1"/>
    <property type="molecule type" value="Genomic_DNA"/>
</dbReference>
<dbReference type="RefSeq" id="NP_708623.1">
    <property type="nucleotide sequence ID" value="NC_004337.2"/>
</dbReference>
<dbReference type="RefSeq" id="WP_001199295.1">
    <property type="nucleotide sequence ID" value="NZ_WPGW01000008.1"/>
</dbReference>
<dbReference type="SMR" id="P0A9T5"/>
<dbReference type="STRING" id="198214.SF2844"/>
<dbReference type="PaxDb" id="198214-SF2844"/>
<dbReference type="GeneID" id="1025802"/>
<dbReference type="KEGG" id="sfl:SF2844"/>
<dbReference type="KEGG" id="sfx:S3042"/>
<dbReference type="PATRIC" id="fig|198214.7.peg.3384"/>
<dbReference type="HOGENOM" id="CLU_023205_2_0_6"/>
<dbReference type="Proteomes" id="UP000001006">
    <property type="component" value="Chromosome"/>
</dbReference>
<dbReference type="Proteomes" id="UP000002673">
    <property type="component" value="Chromosome"/>
</dbReference>
<dbReference type="GO" id="GO:0016491">
    <property type="term" value="F:oxidoreductase activity"/>
    <property type="evidence" value="ECO:0007669"/>
    <property type="project" value="UniProtKB-KW"/>
</dbReference>
<dbReference type="CDD" id="cd19094">
    <property type="entry name" value="AKR_Tas-like"/>
    <property type="match status" value="1"/>
</dbReference>
<dbReference type="FunFam" id="3.20.20.100:FF:000005">
    <property type="entry name" value="NADP(H)-dependent aldo-keto reductase"/>
    <property type="match status" value="1"/>
</dbReference>
<dbReference type="Gene3D" id="3.20.20.100">
    <property type="entry name" value="NADP-dependent oxidoreductase domain"/>
    <property type="match status" value="1"/>
</dbReference>
<dbReference type="InterPro" id="IPR020471">
    <property type="entry name" value="AKR"/>
</dbReference>
<dbReference type="InterPro" id="IPR050523">
    <property type="entry name" value="AKR_Detox_Biosynth"/>
</dbReference>
<dbReference type="InterPro" id="IPR023210">
    <property type="entry name" value="NADP_OxRdtase_dom"/>
</dbReference>
<dbReference type="InterPro" id="IPR036812">
    <property type="entry name" value="NADP_OxRdtase_dom_sf"/>
</dbReference>
<dbReference type="NCBIfam" id="NF007912">
    <property type="entry name" value="PRK10625.1"/>
    <property type="match status" value="1"/>
</dbReference>
<dbReference type="PANTHER" id="PTHR43364:SF4">
    <property type="entry name" value="NAD(P)-LINKED OXIDOREDUCTASE SUPERFAMILY PROTEIN"/>
    <property type="match status" value="1"/>
</dbReference>
<dbReference type="PANTHER" id="PTHR43364">
    <property type="entry name" value="NADH-SPECIFIC METHYLGLYOXAL REDUCTASE-RELATED"/>
    <property type="match status" value="1"/>
</dbReference>
<dbReference type="Pfam" id="PF00248">
    <property type="entry name" value="Aldo_ket_red"/>
    <property type="match status" value="1"/>
</dbReference>
<dbReference type="PRINTS" id="PR00069">
    <property type="entry name" value="ALDKETRDTASE"/>
</dbReference>
<dbReference type="SUPFAM" id="SSF51430">
    <property type="entry name" value="NAD(P)-linked oxidoreductase"/>
    <property type="match status" value="1"/>
</dbReference>
<organism>
    <name type="scientific">Shigella flexneri</name>
    <dbReference type="NCBI Taxonomy" id="623"/>
    <lineage>
        <taxon>Bacteria</taxon>
        <taxon>Pseudomonadati</taxon>
        <taxon>Pseudomonadota</taxon>
        <taxon>Gammaproteobacteria</taxon>
        <taxon>Enterobacterales</taxon>
        <taxon>Enterobacteriaceae</taxon>
        <taxon>Shigella</taxon>
    </lineage>
</organism>
<sequence length="346" mass="38500">MQYHRIPHSSLEVSTLGLGTMTFGEQNSEADAHAQLDYAVAQGINLIDVAEMYPVPPRPETQGLTETYVGNWLAKHGSREKLIIASKVSGPSRNNDKGIRPDQALDRKNIREALHDSLKRLQTDYLDLYQVHWPQRPTNCFGKLGYSWTDSAPAVSLLDTLDALAEYQRAGKIRYIGVSNETAFGVMRYLHLADKHDLPRIVTIQNPYSLLNRSFEVGLAEVSQYEGVELLAYSCLGFGTLTGKYLNGAKPAGARNTLFSRFTRYSGEQTQKAVAAYVDIARRHGLDPAQMALAFVRRQPFVASTLLGATTMDQLKTNIESLHLELSEDVLAEIEAVHQVYTYPAP</sequence>
<reference key="1">
    <citation type="journal article" date="2002" name="Nucleic Acids Res.">
        <title>Genome sequence of Shigella flexneri 2a: insights into pathogenicity through comparison with genomes of Escherichia coli K12 and O157.</title>
        <authorList>
            <person name="Jin Q."/>
            <person name="Yuan Z."/>
            <person name="Xu J."/>
            <person name="Wang Y."/>
            <person name="Shen Y."/>
            <person name="Lu W."/>
            <person name="Wang J."/>
            <person name="Liu H."/>
            <person name="Yang J."/>
            <person name="Yang F."/>
            <person name="Zhang X."/>
            <person name="Zhang J."/>
            <person name="Yang G."/>
            <person name="Wu H."/>
            <person name="Qu D."/>
            <person name="Dong J."/>
            <person name="Sun L."/>
            <person name="Xue Y."/>
            <person name="Zhao A."/>
            <person name="Gao Y."/>
            <person name="Zhu J."/>
            <person name="Kan B."/>
            <person name="Ding K."/>
            <person name="Chen S."/>
            <person name="Cheng H."/>
            <person name="Yao Z."/>
            <person name="He B."/>
            <person name="Chen R."/>
            <person name="Ma D."/>
            <person name="Qiang B."/>
            <person name="Wen Y."/>
            <person name="Hou Y."/>
            <person name="Yu J."/>
        </authorList>
    </citation>
    <scope>NUCLEOTIDE SEQUENCE [LARGE SCALE GENOMIC DNA]</scope>
    <source>
        <strain>301 / Serotype 2a</strain>
    </source>
</reference>
<reference key="2">
    <citation type="journal article" date="2003" name="Infect. Immun.">
        <title>Complete genome sequence and comparative genomics of Shigella flexneri serotype 2a strain 2457T.</title>
        <authorList>
            <person name="Wei J."/>
            <person name="Goldberg M.B."/>
            <person name="Burland V."/>
            <person name="Venkatesan M.M."/>
            <person name="Deng W."/>
            <person name="Fournier G."/>
            <person name="Mayhew G.F."/>
            <person name="Plunkett G. III"/>
            <person name="Rose D.J."/>
            <person name="Darling A."/>
            <person name="Mau B."/>
            <person name="Perna N.T."/>
            <person name="Payne S.M."/>
            <person name="Runyen-Janecky L.J."/>
            <person name="Zhou S."/>
            <person name="Schwartz D.C."/>
            <person name="Blattner F.R."/>
        </authorList>
    </citation>
    <scope>NUCLEOTIDE SEQUENCE [LARGE SCALE GENOMIC DNA]</scope>
    <source>
        <strain>ATCC 700930 / 2457T / Serotype 2a</strain>
    </source>
</reference>
<protein>
    <recommendedName>
        <fullName>Protein tas</fullName>
    </recommendedName>
</protein>